<feature type="chain" id="PRO_0000286428" description="Hairy/enhancer-of-split related with YRPW motif-like protein">
    <location>
        <begin position="1"/>
        <end position="328"/>
    </location>
</feature>
<feature type="domain" description="bHLH" evidence="3">
    <location>
        <begin position="43"/>
        <end position="98"/>
    </location>
</feature>
<feature type="domain" description="Orange" evidence="2">
    <location>
        <begin position="116"/>
        <end position="153"/>
    </location>
</feature>
<feature type="region of interest" description="Disordered" evidence="4">
    <location>
        <begin position="1"/>
        <end position="54"/>
    </location>
</feature>
<feature type="region of interest" description="Transcriptional repression and interaction with NCOR1 and SIN3A" evidence="1">
    <location>
        <begin position="42"/>
        <end position="111"/>
    </location>
</feature>
<feature type="region of interest" description="Disordered" evidence="4">
    <location>
        <begin position="236"/>
        <end position="272"/>
    </location>
</feature>
<feature type="splice variant" id="VSP_025054" description="In isoform 2." evidence="5">
    <location>
        <begin position="1"/>
        <end position="28"/>
    </location>
</feature>
<proteinExistence type="evidence at transcript level"/>
<name>HEYL_BOVIN</name>
<gene>
    <name type="primary">HEYL</name>
</gene>
<protein>
    <recommendedName>
        <fullName>Hairy/enhancer-of-split related with YRPW motif-like protein</fullName>
    </recommendedName>
</protein>
<accession>Q2NL18</accession>
<accession>Q58CQ8</accession>
<comment type="function">
    <text evidence="1">Downstream effector of Notch signaling which may be required for cardiovascular development. Transcriptional repressor which binds preferentially to the canonical E box sequence 5'-CACGTG-3'. Represses transcription by the cardiac transcriptional activators GATA4 and GATA6.</text>
</comment>
<comment type="subunit">
    <text evidence="1">Self-associates. Interacts with GATA4, GATA6, HES1, HEY1 and HEY2. Interacts with HDAC1, NCOR1 and SIN3A.</text>
</comment>
<comment type="subcellular location">
    <subcellularLocation>
        <location evidence="2 3">Nucleus</location>
    </subcellularLocation>
</comment>
<comment type="alternative products">
    <event type="alternative splicing"/>
    <isoform>
        <id>Q2NL18-1</id>
        <name>1</name>
        <sequence type="displayed"/>
    </isoform>
    <isoform>
        <id>Q2NL18-2</id>
        <name>2</name>
        <sequence type="described" ref="VSP_025054"/>
    </isoform>
</comment>
<comment type="similarity">
    <text evidence="6">Belongs to the HEY family.</text>
</comment>
<comment type="sequence caution" evidence="6">
    <conflict type="erroneous initiation">
        <sequence resource="EMBL-CDS" id="AAI11206"/>
    </conflict>
</comment>
<comment type="sequence caution" evidence="6">
    <conflict type="frameshift">
        <sequence resource="EMBL-CDS" id="AAX46736"/>
    </conflict>
</comment>
<sequence length="328" mass="35192">MKRPREPSGSDSESDGPIDVGREGELSQMARPLSTPSPSQMQARKKRRGIIEKRRRDRINSSLSELRRLVPTAFEKQGSSKLEKAEVLQMTVDHLKMLHATGGTGFFDARALAVDFRSIGFRECLTEVIRYLGVLEGPSSRADPVRIRLLSHLNSYAAEMEPSPTPPGPLAFPAWPWSFFHSCPGLSAPSNQLAILGRVPGPMLPNASSLAYPIPGLRAAPLRRAAGTILPARRNLLPSRGASSTRRARPLERPAAPLPAAPSGRATRGSHMAPLLRSPSPVSPGMVGSPAYMAVPAPRPSSPGLAGRPAGAMLCRSWVSEITEVGAF</sequence>
<reference key="1">
    <citation type="journal article" date="2005" name="BMC Genomics">
        <title>Characterization of 954 bovine full-CDS cDNA sequences.</title>
        <authorList>
            <person name="Harhay G.P."/>
            <person name="Sonstegard T.S."/>
            <person name="Keele J.W."/>
            <person name="Heaton M.P."/>
            <person name="Clawson M.L."/>
            <person name="Snelling W.M."/>
            <person name="Wiedmann R.T."/>
            <person name="Van Tassell C.P."/>
            <person name="Smith T.P.L."/>
        </authorList>
    </citation>
    <scope>NUCLEOTIDE SEQUENCE [LARGE SCALE MRNA] (ISOFORM 2)</scope>
</reference>
<reference key="2">
    <citation type="submission" date="2005-12" db="EMBL/GenBank/DDBJ databases">
        <authorList>
            <consortium name="NIH - Mammalian Gene Collection (MGC) project"/>
        </authorList>
    </citation>
    <scope>NUCLEOTIDE SEQUENCE [LARGE SCALE MRNA] (ISOFORM 1)</scope>
    <source>
        <strain>Crossbred X Angus</strain>
        <tissue>Liver</tissue>
    </source>
</reference>
<keyword id="KW-0025">Alternative splicing</keyword>
<keyword id="KW-0217">Developmental protein</keyword>
<keyword id="KW-0238">DNA-binding</keyword>
<keyword id="KW-0914">Notch signaling pathway</keyword>
<keyword id="KW-0539">Nucleus</keyword>
<keyword id="KW-1185">Reference proteome</keyword>
<keyword id="KW-0678">Repressor</keyword>
<keyword id="KW-0804">Transcription</keyword>
<keyword id="KW-0805">Transcription regulation</keyword>
<dbReference type="EMBL" id="BT021889">
    <property type="protein sequence ID" value="AAX46736.1"/>
    <property type="status" value="ALT_FRAME"/>
    <property type="molecule type" value="mRNA"/>
</dbReference>
<dbReference type="EMBL" id="BC111205">
    <property type="protein sequence ID" value="AAI11206.2"/>
    <property type="status" value="ALT_INIT"/>
    <property type="molecule type" value="mRNA"/>
</dbReference>
<dbReference type="RefSeq" id="XP_005204852.1">
    <molecule id="Q2NL18-2"/>
    <property type="nucleotide sequence ID" value="XM_005204795.5"/>
</dbReference>
<dbReference type="RefSeq" id="XP_005204853.1">
    <molecule id="Q2NL18-2"/>
    <property type="nucleotide sequence ID" value="XM_005204796.2"/>
</dbReference>
<dbReference type="SMR" id="Q2NL18"/>
<dbReference type="FunCoup" id="Q2NL18">
    <property type="interactions" value="107"/>
</dbReference>
<dbReference type="STRING" id="9913.ENSBTAP00000011453"/>
<dbReference type="PaxDb" id="9913-ENSBTAP00000011453"/>
<dbReference type="GeneID" id="538609"/>
<dbReference type="CTD" id="26508"/>
<dbReference type="VEuPathDB" id="HostDB:ENSBTAG00000008688"/>
<dbReference type="eggNOG" id="KOG4304">
    <property type="taxonomic scope" value="Eukaryota"/>
</dbReference>
<dbReference type="HOGENOM" id="CLU_048294_1_1_1"/>
<dbReference type="InParanoid" id="Q2NL18"/>
<dbReference type="OMA" id="AFPVWPW"/>
<dbReference type="OrthoDB" id="6371181at2759"/>
<dbReference type="Proteomes" id="UP000009136">
    <property type="component" value="Chromosome 3"/>
</dbReference>
<dbReference type="Bgee" id="ENSBTAG00000008688">
    <property type="expression patterns" value="Expressed in bone marrow and 98 other cell types or tissues"/>
</dbReference>
<dbReference type="GO" id="GO:0005634">
    <property type="term" value="C:nucleus"/>
    <property type="evidence" value="ECO:0000318"/>
    <property type="project" value="GO_Central"/>
</dbReference>
<dbReference type="GO" id="GO:0046983">
    <property type="term" value="F:protein dimerization activity"/>
    <property type="evidence" value="ECO:0007669"/>
    <property type="project" value="InterPro"/>
</dbReference>
<dbReference type="GO" id="GO:0000978">
    <property type="term" value="F:RNA polymerase II cis-regulatory region sequence-specific DNA binding"/>
    <property type="evidence" value="ECO:0000318"/>
    <property type="project" value="GO_Central"/>
</dbReference>
<dbReference type="GO" id="GO:0007219">
    <property type="term" value="P:Notch signaling pathway"/>
    <property type="evidence" value="ECO:0007669"/>
    <property type="project" value="UniProtKB-KW"/>
</dbReference>
<dbReference type="GO" id="GO:0006355">
    <property type="term" value="P:regulation of DNA-templated transcription"/>
    <property type="evidence" value="ECO:0007669"/>
    <property type="project" value="InterPro"/>
</dbReference>
<dbReference type="GO" id="GO:0050767">
    <property type="term" value="P:regulation of neurogenesis"/>
    <property type="evidence" value="ECO:0000318"/>
    <property type="project" value="GO_Central"/>
</dbReference>
<dbReference type="CDD" id="cd11447">
    <property type="entry name" value="bHLH-O_HEYL"/>
    <property type="match status" value="1"/>
</dbReference>
<dbReference type="FunFam" id="4.10.280.10:FF:000012">
    <property type="entry name" value="hairy/enhancer-of-split related with YRPW motif protein 1"/>
    <property type="match status" value="1"/>
</dbReference>
<dbReference type="Gene3D" id="6.10.250.980">
    <property type="match status" value="1"/>
</dbReference>
<dbReference type="Gene3D" id="4.10.280.10">
    <property type="entry name" value="Helix-loop-helix DNA-binding domain"/>
    <property type="match status" value="1"/>
</dbReference>
<dbReference type="InterPro" id="IPR011598">
    <property type="entry name" value="bHLH_dom"/>
</dbReference>
<dbReference type="InterPro" id="IPR050370">
    <property type="entry name" value="HES_HEY"/>
</dbReference>
<dbReference type="InterPro" id="IPR036638">
    <property type="entry name" value="HLH_DNA-bd_sf"/>
</dbReference>
<dbReference type="InterPro" id="IPR003650">
    <property type="entry name" value="Orange_dom"/>
</dbReference>
<dbReference type="PANTHER" id="PTHR10985">
    <property type="entry name" value="BASIC HELIX-LOOP-HELIX TRANSCRIPTION FACTOR, HES-RELATED"/>
    <property type="match status" value="1"/>
</dbReference>
<dbReference type="Pfam" id="PF07527">
    <property type="entry name" value="Hairy_orange"/>
    <property type="match status" value="1"/>
</dbReference>
<dbReference type="Pfam" id="PF00010">
    <property type="entry name" value="HLH"/>
    <property type="match status" value="1"/>
</dbReference>
<dbReference type="SMART" id="SM00353">
    <property type="entry name" value="HLH"/>
    <property type="match status" value="1"/>
</dbReference>
<dbReference type="SMART" id="SM00511">
    <property type="entry name" value="ORANGE"/>
    <property type="match status" value="1"/>
</dbReference>
<dbReference type="SUPFAM" id="SSF47459">
    <property type="entry name" value="HLH, helix-loop-helix DNA-binding domain"/>
    <property type="match status" value="1"/>
</dbReference>
<dbReference type="SUPFAM" id="SSF158457">
    <property type="entry name" value="Orange domain-like"/>
    <property type="match status" value="1"/>
</dbReference>
<dbReference type="PROSITE" id="PS50888">
    <property type="entry name" value="BHLH"/>
    <property type="match status" value="1"/>
</dbReference>
<dbReference type="PROSITE" id="PS51054">
    <property type="entry name" value="ORANGE"/>
    <property type="match status" value="1"/>
</dbReference>
<evidence type="ECO:0000250" key="1"/>
<evidence type="ECO:0000255" key="2">
    <source>
        <dbReference type="PROSITE-ProRule" id="PRU00380"/>
    </source>
</evidence>
<evidence type="ECO:0000255" key="3">
    <source>
        <dbReference type="PROSITE-ProRule" id="PRU00981"/>
    </source>
</evidence>
<evidence type="ECO:0000256" key="4">
    <source>
        <dbReference type="SAM" id="MobiDB-lite"/>
    </source>
</evidence>
<evidence type="ECO:0000303" key="5">
    <source>
    </source>
</evidence>
<evidence type="ECO:0000305" key="6"/>
<organism>
    <name type="scientific">Bos taurus</name>
    <name type="common">Bovine</name>
    <dbReference type="NCBI Taxonomy" id="9913"/>
    <lineage>
        <taxon>Eukaryota</taxon>
        <taxon>Metazoa</taxon>
        <taxon>Chordata</taxon>
        <taxon>Craniata</taxon>
        <taxon>Vertebrata</taxon>
        <taxon>Euteleostomi</taxon>
        <taxon>Mammalia</taxon>
        <taxon>Eutheria</taxon>
        <taxon>Laurasiatheria</taxon>
        <taxon>Artiodactyla</taxon>
        <taxon>Ruminantia</taxon>
        <taxon>Pecora</taxon>
        <taxon>Bovidae</taxon>
        <taxon>Bovinae</taxon>
        <taxon>Bos</taxon>
    </lineage>
</organism>